<proteinExistence type="evidence at protein level"/>
<keyword id="KW-0001">2Fe-2S</keyword>
<keyword id="KW-0002">3D-structure</keyword>
<keyword id="KW-0153">Cholesterol metabolism</keyword>
<keyword id="KW-0408">Iron</keyword>
<keyword id="KW-0411">Iron-sulfur</keyword>
<keyword id="KW-0442">Lipid degradation</keyword>
<keyword id="KW-0443">Lipid metabolism</keyword>
<keyword id="KW-0479">Metal-binding</keyword>
<keyword id="KW-0560">Oxidoreductase</keyword>
<keyword id="KW-1185">Reference proteome</keyword>
<keyword id="KW-0753">Steroid metabolism</keyword>
<keyword id="KW-1207">Sterol metabolism</keyword>
<keyword id="KW-0843">Virulence</keyword>
<sequence length="386" mass="44268">MSTDTSGVGVREIDAGALPTRYARGWHCLGVAKDYLEGKPHGVEAFGTKLVVFADSHGDLKVLDGYCRHMGGDLSEGTVKGDEVACPFHDWRWGGDGRCKLVPYARRTPRMARTRSWTTDVRSGLLFVWHDHEGNPPDPAVRIPEIPEAASDEWTDWRWNRILIEGSNCRDIIDNVTDMAHFFYIHFGLPTYFKNVFEGHIASQYLHNVGRPDVDDLGTSYGEAHLDSEASYFGPSFMINWLHNRYGNYKSESILINCHYPVTQNSFVLQWGVIVEKPKGMSEEMTDKLSRVFTEGVSKGFLQDVEIWKHKTRIDNPLLVEEDGAVYQLRRWYEQFYVDVADIKPEMVERFEIEVDTKRANEFWNAEVEKNLKSREVSDDVPAEQH</sequence>
<dbReference type="EC" id="1.14.15.30" evidence="4 5"/>
<dbReference type="EMBL" id="AL123456">
    <property type="protein sequence ID" value="CCP46348.1"/>
    <property type="molecule type" value="Genomic_DNA"/>
</dbReference>
<dbReference type="PIR" id="G70674">
    <property type="entry name" value="G70674"/>
</dbReference>
<dbReference type="RefSeq" id="NP_218043.1">
    <property type="nucleotide sequence ID" value="NC_000962.3"/>
</dbReference>
<dbReference type="RefSeq" id="WP_003419211.1">
    <property type="nucleotide sequence ID" value="NZ_NVQJ01000014.1"/>
</dbReference>
<dbReference type="PDB" id="2ZYL">
    <property type="method" value="X-ray"/>
    <property type="resolution" value="2.30 A"/>
    <property type="chains" value="A=1-386"/>
</dbReference>
<dbReference type="PDB" id="4QCK">
    <property type="method" value="X-ray"/>
    <property type="resolution" value="2.46 A"/>
    <property type="chains" value="A=1-386"/>
</dbReference>
<dbReference type="PDBsum" id="2ZYL"/>
<dbReference type="PDBsum" id="4QCK"/>
<dbReference type="SMR" id="P71875"/>
<dbReference type="FunCoup" id="P71875">
    <property type="interactions" value="14"/>
</dbReference>
<dbReference type="STRING" id="83332.Rv3526"/>
<dbReference type="SwissLipids" id="SLP:000001163"/>
<dbReference type="PaxDb" id="83332-Rv3526"/>
<dbReference type="GeneID" id="888268"/>
<dbReference type="KEGG" id="mtu:Rv3526"/>
<dbReference type="KEGG" id="mtv:RVBD_3526"/>
<dbReference type="TubercuList" id="Rv3526"/>
<dbReference type="eggNOG" id="COG4638">
    <property type="taxonomic scope" value="Bacteria"/>
</dbReference>
<dbReference type="InParanoid" id="P71875"/>
<dbReference type="OrthoDB" id="5243643at2"/>
<dbReference type="PhylomeDB" id="P71875"/>
<dbReference type="BioCyc" id="MetaCyc:G185E-7803-MONOMER"/>
<dbReference type="BRENDA" id="1.14.15.30">
    <property type="organism ID" value="3445"/>
</dbReference>
<dbReference type="UniPathway" id="UPA00062"/>
<dbReference type="EvolutionaryTrace" id="P71875"/>
<dbReference type="Proteomes" id="UP000001584">
    <property type="component" value="Chromosome"/>
</dbReference>
<dbReference type="GO" id="GO:0051537">
    <property type="term" value="F:2 iron, 2 sulfur cluster binding"/>
    <property type="evidence" value="ECO:0000314"/>
    <property type="project" value="MTBBASE"/>
</dbReference>
<dbReference type="GO" id="GO:0036200">
    <property type="term" value="F:3-ketosteroid 9-alpha-monooxygenase activity"/>
    <property type="evidence" value="ECO:0000314"/>
    <property type="project" value="UniProtKB"/>
</dbReference>
<dbReference type="GO" id="GO:0005506">
    <property type="term" value="F:iron ion binding"/>
    <property type="evidence" value="ECO:0000314"/>
    <property type="project" value="MTBBASE"/>
</dbReference>
<dbReference type="GO" id="GO:0047086">
    <property type="term" value="F:ketosteroid monooxygenase activity"/>
    <property type="evidence" value="ECO:0000314"/>
    <property type="project" value="MTBBASE"/>
</dbReference>
<dbReference type="GO" id="GO:0006707">
    <property type="term" value="P:cholesterol catabolic process"/>
    <property type="evidence" value="ECO:0000314"/>
    <property type="project" value="MTBBASE"/>
</dbReference>
<dbReference type="GO" id="GO:0070207">
    <property type="term" value="P:protein homotrimerization"/>
    <property type="evidence" value="ECO:0000353"/>
    <property type="project" value="MTBBASE"/>
</dbReference>
<dbReference type="GO" id="GO:0070723">
    <property type="term" value="P:response to cholesterol"/>
    <property type="evidence" value="ECO:0000270"/>
    <property type="project" value="MTBBASE"/>
</dbReference>
<dbReference type="GO" id="GO:0006694">
    <property type="term" value="P:steroid biosynthetic process"/>
    <property type="evidence" value="ECO:0007669"/>
    <property type="project" value="UniProtKB-UniPathway"/>
</dbReference>
<dbReference type="CDD" id="cd03531">
    <property type="entry name" value="Rieske_RO_Alpha_KSH"/>
    <property type="match status" value="1"/>
</dbReference>
<dbReference type="FunFam" id="2.102.10.10:FF:000012">
    <property type="entry name" value="3-ketosteroid-9-alpha-hydroxylase oxygenase subunit"/>
    <property type="match status" value="1"/>
</dbReference>
<dbReference type="FunFam" id="3.90.380.10:FF:000004">
    <property type="entry name" value="3-ketosteroid-9-alpha-hydroxylase oxygenase subunit"/>
    <property type="match status" value="1"/>
</dbReference>
<dbReference type="Gene3D" id="3.90.380.10">
    <property type="entry name" value="Naphthalene 1,2-dioxygenase Alpha Subunit, Chain A, domain 1"/>
    <property type="match status" value="1"/>
</dbReference>
<dbReference type="Gene3D" id="2.102.10.10">
    <property type="entry name" value="Rieske [2Fe-2S] iron-sulphur domain"/>
    <property type="match status" value="1"/>
</dbReference>
<dbReference type="InterPro" id="IPR050584">
    <property type="entry name" value="Cholesterol_7-desaturase"/>
</dbReference>
<dbReference type="InterPro" id="IPR045605">
    <property type="entry name" value="KshA-like_C"/>
</dbReference>
<dbReference type="InterPro" id="IPR017941">
    <property type="entry name" value="Rieske_2Fe-2S"/>
</dbReference>
<dbReference type="InterPro" id="IPR036922">
    <property type="entry name" value="Rieske_2Fe-2S_sf"/>
</dbReference>
<dbReference type="PANTHER" id="PTHR21266:SF60">
    <property type="entry name" value="3-KETOSTEROID-9-ALPHA-MONOOXYGENASE, OXYGENASE COMPONENT"/>
    <property type="match status" value="1"/>
</dbReference>
<dbReference type="PANTHER" id="PTHR21266">
    <property type="entry name" value="IRON-SULFUR DOMAIN CONTAINING PROTEIN"/>
    <property type="match status" value="1"/>
</dbReference>
<dbReference type="Pfam" id="PF19298">
    <property type="entry name" value="KshA_C"/>
    <property type="match status" value="1"/>
</dbReference>
<dbReference type="Pfam" id="PF00355">
    <property type="entry name" value="Rieske"/>
    <property type="match status" value="1"/>
</dbReference>
<dbReference type="SUPFAM" id="SSF55961">
    <property type="entry name" value="Bet v1-like"/>
    <property type="match status" value="1"/>
</dbReference>
<dbReference type="SUPFAM" id="SSF50022">
    <property type="entry name" value="ISP domain"/>
    <property type="match status" value="1"/>
</dbReference>
<dbReference type="PROSITE" id="PS51296">
    <property type="entry name" value="RIESKE"/>
    <property type="match status" value="1"/>
</dbReference>
<organism>
    <name type="scientific">Mycobacterium tuberculosis (strain ATCC 25618 / H37Rv)</name>
    <dbReference type="NCBI Taxonomy" id="83332"/>
    <lineage>
        <taxon>Bacteria</taxon>
        <taxon>Bacillati</taxon>
        <taxon>Actinomycetota</taxon>
        <taxon>Actinomycetes</taxon>
        <taxon>Mycobacteriales</taxon>
        <taxon>Mycobacteriaceae</taxon>
        <taxon>Mycobacterium</taxon>
        <taxon>Mycobacterium tuberculosis complex</taxon>
    </lineage>
</organism>
<protein>
    <recommendedName>
        <fullName evidence="7">3-ketosteroid-9-alpha-monooxygenase, oxygenase component</fullName>
    </recommendedName>
    <alternativeName>
        <fullName evidence="7">3-ketosteroid-9-alpha-hydroxylase, oxygenase component</fullName>
        <shortName evidence="7">KSH</shortName>
    </alternativeName>
    <alternativeName>
        <fullName evidence="7">Androsta-1,4-diene-3,17-dione 9-alpha-hydroxylase</fullName>
        <ecNumber evidence="4 5">1.14.15.30</ecNumber>
    </alternativeName>
    <alternativeName>
        <fullName evidence="7">Rieske-type oxygenase</fullName>
        <shortName evidence="7">RO</shortName>
    </alternativeName>
</protein>
<name>KSHA_MYCTU</name>
<reference key="1">
    <citation type="journal article" date="1998" name="Nature">
        <title>Deciphering the biology of Mycobacterium tuberculosis from the complete genome sequence.</title>
        <authorList>
            <person name="Cole S.T."/>
            <person name="Brosch R."/>
            <person name="Parkhill J."/>
            <person name="Garnier T."/>
            <person name="Churcher C.M."/>
            <person name="Harris D.E."/>
            <person name="Gordon S.V."/>
            <person name="Eiglmeier K."/>
            <person name="Gas S."/>
            <person name="Barry C.E. III"/>
            <person name="Tekaia F."/>
            <person name="Badcock K."/>
            <person name="Basham D."/>
            <person name="Brown D."/>
            <person name="Chillingworth T."/>
            <person name="Connor R."/>
            <person name="Davies R.M."/>
            <person name="Devlin K."/>
            <person name="Feltwell T."/>
            <person name="Gentles S."/>
            <person name="Hamlin N."/>
            <person name="Holroyd S."/>
            <person name="Hornsby T."/>
            <person name="Jagels K."/>
            <person name="Krogh A."/>
            <person name="McLean J."/>
            <person name="Moule S."/>
            <person name="Murphy L.D."/>
            <person name="Oliver S."/>
            <person name="Osborne J."/>
            <person name="Quail M.A."/>
            <person name="Rajandream M.A."/>
            <person name="Rogers J."/>
            <person name="Rutter S."/>
            <person name="Seeger K."/>
            <person name="Skelton S."/>
            <person name="Squares S."/>
            <person name="Squares R."/>
            <person name="Sulston J.E."/>
            <person name="Taylor K."/>
            <person name="Whitehead S."/>
            <person name="Barrell B.G."/>
        </authorList>
    </citation>
    <scope>NUCLEOTIDE SEQUENCE [LARGE SCALE GENOMIC DNA]</scope>
    <source>
        <strain>ATCC 25618 / H37Rv</strain>
    </source>
</reference>
<reference key="2">
    <citation type="journal article" date="2007" name="Mol. Microbiol.">
        <title>A highly conserved transcriptional repressor controls a large regulon involved in lipid degradation in Mycobacterium smegmatis and Mycobacterium tuberculosis.</title>
        <authorList>
            <person name="Kendall S.L."/>
            <person name="Withers M."/>
            <person name="Soffair C.N."/>
            <person name="Moreland N.J."/>
            <person name="Gurcha S."/>
            <person name="Sidders B."/>
            <person name="Frita R."/>
            <person name="Ten Bokum A."/>
            <person name="Besra G.S."/>
            <person name="Lott J.S."/>
            <person name="Stoker N.G."/>
        </authorList>
    </citation>
    <scope>INDUCTION</scope>
    <source>
        <strain>ATCC 25618 / H37Rv</strain>
    </source>
</reference>
<reference key="3">
    <citation type="journal article" date="2011" name="J. Biol. Chem.">
        <title>Activity of 3-ketosteroid 9alpha-hydroxylase (KshAB) indicates cholesterol side chain and ring degradation occur simultaneously in Mycobacterium tuberculosis.</title>
        <authorList>
            <person name="Capyk J.K."/>
            <person name="Casabon I."/>
            <person name="Gruninger R."/>
            <person name="Strynadka N.C."/>
            <person name="Eltis L.D."/>
        </authorList>
    </citation>
    <scope>FUNCTION</scope>
    <scope>CATALYTIC ACTIVITY</scope>
    <scope>BIOPHYSICOCHEMICAL PROPERTIES</scope>
    <scope>SUBSTRATE SPECIFICITY</scope>
    <scope>SUBUNIT</scope>
</reference>
<reference key="4">
    <citation type="journal article" date="2011" name="Mol. Cell. Proteomics">
        <title>Proteogenomic analysis of Mycobacterium tuberculosis by high resolution mass spectrometry.</title>
        <authorList>
            <person name="Kelkar D.S."/>
            <person name="Kumar D."/>
            <person name="Kumar P."/>
            <person name="Balakrishnan L."/>
            <person name="Muthusamy B."/>
            <person name="Yadav A.K."/>
            <person name="Shrivastava P."/>
            <person name="Marimuthu A."/>
            <person name="Anand S."/>
            <person name="Sundaram H."/>
            <person name="Kingsbury R."/>
            <person name="Harsha H.C."/>
            <person name="Nair B."/>
            <person name="Prasad T.S."/>
            <person name="Chauhan D.S."/>
            <person name="Katoch K."/>
            <person name="Katoch V.M."/>
            <person name="Kumar P."/>
            <person name="Chaerkady R."/>
            <person name="Ramachandran S."/>
            <person name="Dash D."/>
            <person name="Pandey A."/>
        </authorList>
    </citation>
    <scope>IDENTIFICATION BY MASS SPECTROMETRY [LARGE SCALE ANALYSIS]</scope>
    <source>
        <strain>ATCC 25618 / H37Rv</strain>
    </source>
</reference>
<reference key="5">
    <citation type="journal article" date="2009" name="J. Biol. Chem.">
        <title>Characterization of 3-ketosteroid 9{alpha}-hydroxylase, a Rieske oxygenase in the cholesterol degradation pathway of Mycobacterium tuberculosis.</title>
        <authorList>
            <person name="Capyk J.K."/>
            <person name="D'Angelo I."/>
            <person name="Strynadka N.C."/>
            <person name="Eltis L.D."/>
        </authorList>
    </citation>
    <scope>X-RAY CRYSTALLOGRAPHY (2.3 ANGSTROMS) IN COMPLEX WITH IRON ION AND IRON-SULFUR (2FE-2S)</scope>
    <scope>FUNCTION</scope>
    <scope>CATALYTIC ACTIVITY</scope>
    <scope>BIOPHYSICOCHEMICAL PROPERTIES</scope>
    <scope>COFACTOR</scope>
    <scope>PATHWAY</scope>
    <scope>SUBUNIT</scope>
    <scope>SUBSTRATE SPECIFICITY</scope>
    <source>
        <strain>ATCC 25618 / H37Rv</strain>
    </source>
</reference>
<reference key="6">
    <citation type="journal article" date="2014" name="J. Biol. Chem.">
        <title>Substrate specificities and conformational flexibility of 3-ketosteroid 9alpha-hydroxylases.</title>
        <authorList>
            <person name="Penfield J.S."/>
            <person name="Worrall L.J."/>
            <person name="Strynadka N.C."/>
            <person name="Eltis L.D."/>
        </authorList>
    </citation>
    <scope>X-RAY CRYSTALLOGRAPHY (2.46 ANGSTROMS) IN COMPLEX WITH IRON ION AND IRON-SULFUR (2FE-2S)</scope>
    <scope>COFACTOR</scope>
</reference>
<comment type="function">
    <text evidence="4 5">Involved in the degradation of cholesterol. Catalyzes the introduction of a 9a-hydroxyl moiety into 1,4-androstadiene-3,17-dione (ADD) to yield the 9alpha-hydroxy-1,4-androstadiene-3,17-dione (9OHADD) intermediate which spontaneously form 3-hydroxy-9,10-seconandrost-1,3,5(10)-triene-9,17-dione (HSA) via the meta-cleavage of ring B with concomitant aromatization of ring A. KSH is also able to use 4-androstene-3,17-dione (AD), 3-oxo-23,24-bisnorcholesta-4-en-22-oate (4-BNC), 3-oxo-23,24-bisnorcholesta-1,4-dien-22-oate (1,4-BNC), 3-oxo-23,24-bisnorcholesta-4-en-22-oyl-coenzyme A thioester (4-BNC-CoA) and 3-oxo-23,24-bisnorcholesta-1,4-dien-22-oyl-coenzyme A thioester (1,4-BNC-CoA) as substrates.</text>
</comment>
<comment type="catalytic activity">
    <reaction evidence="4 5">
        <text>androsta-1,4-diene-3,17-dione + 2 reduced [2Fe-2S]-[ferredoxin] + O2 + 2 H(+) = 9alpha-hydroxyandrosta-1,4-diene-3,17-dione + 2 oxidized [2Fe-2S]-[ferredoxin] + H2O</text>
        <dbReference type="Rhea" id="RHEA:32199"/>
        <dbReference type="Rhea" id="RHEA-COMP:10000"/>
        <dbReference type="Rhea" id="RHEA-COMP:10001"/>
        <dbReference type="ChEBI" id="CHEBI:15377"/>
        <dbReference type="ChEBI" id="CHEBI:15378"/>
        <dbReference type="ChEBI" id="CHEBI:15379"/>
        <dbReference type="ChEBI" id="CHEBI:33737"/>
        <dbReference type="ChEBI" id="CHEBI:33738"/>
        <dbReference type="ChEBI" id="CHEBI:40799"/>
        <dbReference type="ChEBI" id="CHEBI:63641"/>
        <dbReference type="EC" id="1.14.15.30"/>
    </reaction>
    <physiologicalReaction direction="left-to-right" evidence="4 5">
        <dbReference type="Rhea" id="RHEA:32200"/>
    </physiologicalReaction>
</comment>
<comment type="catalytic activity">
    <reaction evidence="4 5">
        <text>androst-4-ene-3,17-dione + NADH + O2 + H(+) = 9alpha-hydroxy-androst-4-ene-3,17-dione + NAD(+) + H2O</text>
        <dbReference type="Rhea" id="RHEA:45968"/>
        <dbReference type="ChEBI" id="CHEBI:15377"/>
        <dbReference type="ChEBI" id="CHEBI:15378"/>
        <dbReference type="ChEBI" id="CHEBI:15379"/>
        <dbReference type="ChEBI" id="CHEBI:16422"/>
        <dbReference type="ChEBI" id="CHEBI:57540"/>
        <dbReference type="ChEBI" id="CHEBI:57945"/>
        <dbReference type="ChEBI" id="CHEBI:85549"/>
    </reaction>
    <physiologicalReaction direction="left-to-right" evidence="5">
        <dbReference type="Rhea" id="RHEA:45969"/>
    </physiologicalReaction>
</comment>
<comment type="catalytic activity">
    <reaction evidence="5">
        <text>3-oxochol-4-en-22-oate + NADH + O2 + H(+) = 9alpha-hydroxy-3-oxochol-4-en-22-oate + NAD(+) + H2O</text>
        <dbReference type="Rhea" id="RHEA:45972"/>
        <dbReference type="ChEBI" id="CHEBI:15377"/>
        <dbReference type="ChEBI" id="CHEBI:15378"/>
        <dbReference type="ChEBI" id="CHEBI:15379"/>
        <dbReference type="ChEBI" id="CHEBI:57540"/>
        <dbReference type="ChEBI" id="CHEBI:57945"/>
        <dbReference type="ChEBI" id="CHEBI:83777"/>
        <dbReference type="ChEBI" id="CHEBI:85550"/>
    </reaction>
    <physiologicalReaction direction="left-to-right" evidence="5">
        <dbReference type="Rhea" id="RHEA:45973"/>
    </physiologicalReaction>
</comment>
<comment type="catalytic activity">
    <reaction evidence="5">
        <text>3-oxochola-1,4-dien-22-oate + NADH + O2 + H(+) = 9alpha-hydroxy-3-oxochola-1,4-dien-22-oate + NAD(+) + H2O</text>
        <dbReference type="Rhea" id="RHEA:45976"/>
        <dbReference type="ChEBI" id="CHEBI:15377"/>
        <dbReference type="ChEBI" id="CHEBI:15378"/>
        <dbReference type="ChEBI" id="CHEBI:15379"/>
        <dbReference type="ChEBI" id="CHEBI:57540"/>
        <dbReference type="ChEBI" id="CHEBI:57945"/>
        <dbReference type="ChEBI" id="CHEBI:85551"/>
        <dbReference type="ChEBI" id="CHEBI:85553"/>
    </reaction>
    <physiologicalReaction direction="left-to-right" evidence="5">
        <dbReference type="Rhea" id="RHEA:45977"/>
    </physiologicalReaction>
</comment>
<comment type="catalytic activity">
    <reaction evidence="5">
        <text>3-oxochol-4-en-22-oyl-CoA + NADH + O2 + H(+) = 9alpha-hydroxy-3-oxochol-4-en-22-oyl-CoA + NAD(+) + H2O</text>
        <dbReference type="Rhea" id="RHEA:45980"/>
        <dbReference type="ChEBI" id="CHEBI:15377"/>
        <dbReference type="ChEBI" id="CHEBI:15378"/>
        <dbReference type="ChEBI" id="CHEBI:15379"/>
        <dbReference type="ChEBI" id="CHEBI:57540"/>
        <dbReference type="ChEBI" id="CHEBI:57945"/>
        <dbReference type="ChEBI" id="CHEBI:83792"/>
        <dbReference type="ChEBI" id="CHEBI:85548"/>
    </reaction>
    <physiologicalReaction direction="left-to-right" evidence="5">
        <dbReference type="Rhea" id="RHEA:45981"/>
    </physiologicalReaction>
</comment>
<comment type="catalytic activity">
    <reaction evidence="5">
        <text>3-oxochola-1,4-dien-22-oyl-CoA + NADH + O2 + H(+) = 9alpha-hydroxy-3-oxochola-1,4-dien-22-oyl-CoA + NAD(+) + H2O</text>
        <dbReference type="Rhea" id="RHEA:45984"/>
        <dbReference type="ChEBI" id="CHEBI:15377"/>
        <dbReference type="ChEBI" id="CHEBI:15378"/>
        <dbReference type="ChEBI" id="CHEBI:15379"/>
        <dbReference type="ChEBI" id="CHEBI:57540"/>
        <dbReference type="ChEBI" id="CHEBI:57945"/>
        <dbReference type="ChEBI" id="CHEBI:83793"/>
        <dbReference type="ChEBI" id="CHEBI:85547"/>
    </reaction>
    <physiologicalReaction direction="left-to-right" evidence="5">
        <dbReference type="Rhea" id="RHEA:45985"/>
    </physiologicalReaction>
</comment>
<comment type="cofactor">
    <cofactor evidence="2 4 6">
        <name>[2Fe-2S] cluster</name>
        <dbReference type="ChEBI" id="CHEBI:190135"/>
    </cofactor>
    <text evidence="2 4 6">Binds 1 [2Fe-2S] cluster per subunit.</text>
</comment>
<comment type="cofactor">
    <cofactor evidence="4 6">
        <name>Fe cation</name>
        <dbReference type="ChEBI" id="CHEBI:24875"/>
    </cofactor>
    <text evidence="4 6">Binds 1 Fe cation.</text>
</comment>
<comment type="biophysicochemical properties">
    <kinetics>
        <KM evidence="5">3 uM for 4-BNC (at pH 7 and at 22 degrees Celsius)</KM>
        <KM evidence="5">6.8 uM for 4-BNC-CoA (at pH 7 and at 22 degrees Celsius)</KM>
        <KM evidence="5">17 uM for 1,4-BNC-CoA (at pH 7 and at 22 degrees Celsius)</KM>
        <KM evidence="4">24 uM for AD (at pH 7 and at 25 degrees Celsius)</KM>
        <KM evidence="5">70 uM for 1,4-BNC (at pH 7 and at 22 degrees Celsius)</KM>
        <KM evidence="4">110 uM for ADD (at pH 7 and at 25 degrees Celsius)</KM>
        <text evidence="4 5">kcat is 2.7 sec(-1) for 1,4-BNC-CoA as substrate (at pH 7 and at 22 degrees Celsius) (PubMed:21987574). kcat is 0.8 sec(-1) for ADD as substrate (at pH 7 and at 25 degrees Celsius) (PubMed:19234303). kcat is 0.61 sec(-1) for 4-BNC-CoA as substrate (at pH 7 and at 22 degrees Celsius) (PubMed:21987574). kcat is 0.25 sec(-1) for 1,4-BNC as substrate (at pH 7 and at 22 degrees Celsius) (PubMed:21987574). kcat is 0.08 sec(-1) for 4-BNC as substrate (at pH 7 and at 22 degrees Celsius) (PubMed:21987574). kcat is 0.07 sec(-1) for AD as substrate (at pH 7 and at 25 degrees Celsius) (PubMed:19234303).</text>
    </kinetics>
</comment>
<comment type="pathway">
    <text evidence="8">Lipid metabolism; steroid biosynthesis.</text>
</comment>
<comment type="subunit">
    <text evidence="4 5">Homotrimer (PubMed:19234303). The two-component system 3-ketosteroid-9-alpha-monooxygenase is composed of an oxygenase component KshA and a reductase component KshB (PubMed:21987574).</text>
</comment>
<comment type="induction">
    <text evidence="3">Induced by KstR.</text>
</comment>
<accession>P71875</accession>
<accession>L0TCS9</accession>
<evidence type="ECO:0000250" key="1">
    <source>
        <dbReference type="UniProtKB" id="F1CMY8"/>
    </source>
</evidence>
<evidence type="ECO:0000255" key="2">
    <source>
        <dbReference type="PROSITE-ProRule" id="PRU00628"/>
    </source>
</evidence>
<evidence type="ECO:0000269" key="3">
    <source>
    </source>
</evidence>
<evidence type="ECO:0000269" key="4">
    <source>
    </source>
</evidence>
<evidence type="ECO:0000269" key="5">
    <source>
    </source>
</evidence>
<evidence type="ECO:0000269" key="6">
    <source>
    </source>
</evidence>
<evidence type="ECO:0000303" key="7">
    <source>
    </source>
</evidence>
<evidence type="ECO:0000305" key="8">
    <source>
    </source>
</evidence>
<evidence type="ECO:0007829" key="9">
    <source>
        <dbReference type="PDB" id="2ZYL"/>
    </source>
</evidence>
<evidence type="ECO:0007829" key="10">
    <source>
        <dbReference type="PDB" id="4QCK"/>
    </source>
</evidence>
<feature type="chain" id="PRO_0000404098" description="3-ketosteroid-9-alpha-monooxygenase, oxygenase component">
    <location>
        <begin position="1"/>
        <end position="386"/>
    </location>
</feature>
<feature type="domain" description="Rieske" evidence="2">
    <location>
        <begin position="26"/>
        <end position="128"/>
    </location>
</feature>
<feature type="binding site" evidence="2 4 6">
    <location>
        <position position="67"/>
    </location>
    <ligand>
        <name>[2Fe-2S] cluster</name>
        <dbReference type="ChEBI" id="CHEBI:190135"/>
    </ligand>
</feature>
<feature type="binding site" evidence="2 4 6">
    <location>
        <position position="69"/>
    </location>
    <ligand>
        <name>[2Fe-2S] cluster</name>
        <dbReference type="ChEBI" id="CHEBI:190135"/>
    </ligand>
</feature>
<feature type="binding site" evidence="2 4 6">
    <location>
        <position position="86"/>
    </location>
    <ligand>
        <name>[2Fe-2S] cluster</name>
        <dbReference type="ChEBI" id="CHEBI:190135"/>
    </ligand>
</feature>
<feature type="binding site" evidence="2 4 6">
    <location>
        <position position="89"/>
    </location>
    <ligand>
        <name>[2Fe-2S] cluster</name>
        <dbReference type="ChEBI" id="CHEBI:190135"/>
    </ligand>
</feature>
<feature type="binding site" evidence="1">
    <location>
        <position position="175"/>
    </location>
    <ligand>
        <name>Fe cation</name>
        <dbReference type="ChEBI" id="CHEBI:24875"/>
    </ligand>
</feature>
<feature type="binding site" evidence="4 6">
    <location>
        <position position="181"/>
    </location>
    <ligand>
        <name>Fe cation</name>
        <dbReference type="ChEBI" id="CHEBI:24875"/>
    </ligand>
</feature>
<feature type="binding site" evidence="4 6">
    <location>
        <position position="186"/>
    </location>
    <ligand>
        <name>Fe cation</name>
        <dbReference type="ChEBI" id="CHEBI:24875"/>
    </ligand>
</feature>
<feature type="binding site" evidence="4 6">
    <location>
        <position position="304"/>
    </location>
    <ligand>
        <name>Fe cation</name>
        <dbReference type="ChEBI" id="CHEBI:24875"/>
    </ligand>
</feature>
<feature type="strand" evidence="9">
    <location>
        <begin position="24"/>
        <end position="31"/>
    </location>
</feature>
<feature type="helix" evidence="9">
    <location>
        <begin position="32"/>
        <end position="35"/>
    </location>
</feature>
<feature type="strand" evidence="9">
    <location>
        <begin position="37"/>
        <end position="39"/>
    </location>
</feature>
<feature type="strand" evidence="9">
    <location>
        <begin position="41"/>
        <end position="45"/>
    </location>
</feature>
<feature type="strand" evidence="9">
    <location>
        <begin position="48"/>
        <end position="54"/>
    </location>
</feature>
<feature type="strand" evidence="9">
    <location>
        <begin position="60"/>
        <end position="66"/>
    </location>
</feature>
<feature type="turn" evidence="9">
    <location>
        <begin position="68"/>
        <end position="70"/>
    </location>
</feature>
<feature type="helix" evidence="9">
    <location>
        <begin position="74"/>
        <end position="76"/>
    </location>
</feature>
<feature type="strand" evidence="9">
    <location>
        <begin position="77"/>
        <end position="80"/>
    </location>
</feature>
<feature type="strand" evidence="9">
    <location>
        <begin position="83"/>
        <end position="85"/>
    </location>
</feature>
<feature type="turn" evidence="9">
    <location>
        <begin position="87"/>
        <end position="89"/>
    </location>
</feature>
<feature type="strand" evidence="9">
    <location>
        <begin position="92"/>
        <end position="94"/>
    </location>
</feature>
<feature type="strand" evidence="9">
    <location>
        <begin position="97"/>
        <end position="101"/>
    </location>
</feature>
<feature type="strand" evidence="9">
    <location>
        <begin position="119"/>
        <end position="122"/>
    </location>
</feature>
<feature type="strand" evidence="9">
    <location>
        <begin position="125"/>
        <end position="130"/>
    </location>
</feature>
<feature type="helix" evidence="9">
    <location>
        <begin position="139"/>
        <end position="141"/>
    </location>
</feature>
<feature type="helix" evidence="9">
    <location>
        <begin position="147"/>
        <end position="150"/>
    </location>
</feature>
<feature type="strand" evidence="9">
    <location>
        <begin position="158"/>
        <end position="167"/>
    </location>
</feature>
<feature type="helix" evidence="9">
    <location>
        <begin position="169"/>
        <end position="177"/>
    </location>
</feature>
<feature type="helix" evidence="9">
    <location>
        <begin position="181"/>
        <end position="184"/>
    </location>
</feature>
<feature type="strand" evidence="9">
    <location>
        <begin position="188"/>
        <end position="198"/>
    </location>
</feature>
<feature type="strand" evidence="9">
    <location>
        <begin position="201"/>
        <end position="210"/>
    </location>
</feature>
<feature type="strand" evidence="9">
    <location>
        <begin position="214"/>
        <end position="216"/>
    </location>
</feature>
<feature type="strand" evidence="9">
    <location>
        <begin position="219"/>
        <end position="221"/>
    </location>
</feature>
<feature type="strand" evidence="9">
    <location>
        <begin position="224"/>
        <end position="246"/>
    </location>
</feature>
<feature type="strand" evidence="9">
    <location>
        <begin position="249"/>
        <end position="263"/>
    </location>
</feature>
<feature type="strand" evidence="9">
    <location>
        <begin position="266"/>
        <end position="276"/>
    </location>
</feature>
<feature type="strand" evidence="10">
    <location>
        <begin position="279"/>
        <end position="281"/>
    </location>
</feature>
<feature type="helix" evidence="9">
    <location>
        <begin position="287"/>
        <end position="308"/>
    </location>
</feature>
<feature type="helix" evidence="9">
    <location>
        <begin position="321"/>
        <end position="323"/>
    </location>
</feature>
<feature type="helix" evidence="9">
    <location>
        <begin position="326"/>
        <end position="334"/>
    </location>
</feature>
<feature type="helix" evidence="9">
    <location>
        <begin position="335"/>
        <end position="337"/>
    </location>
</feature>
<feature type="helix" evidence="9">
    <location>
        <begin position="340"/>
        <end position="342"/>
    </location>
</feature>
<feature type="helix" evidence="9">
    <location>
        <begin position="345"/>
        <end position="348"/>
    </location>
</feature>
<feature type="strand" evidence="9">
    <location>
        <begin position="351"/>
        <end position="354"/>
    </location>
</feature>
<feature type="helix" evidence="9">
    <location>
        <begin position="358"/>
        <end position="372"/>
    </location>
</feature>
<gene>
    <name type="primary">kshA</name>
    <name type="ordered locus">Rv3526</name>
</gene>